<organismHost>
    <name type="scientific">Mus musculus</name>
    <name type="common">Mouse</name>
    <dbReference type="NCBI Taxonomy" id="10090"/>
</organismHost>
<reference key="1">
    <citation type="journal article" date="1991" name="Virology">
        <title>Nucleotide sequence and genome organization of the murine polyomavirus, Kilham strain.</title>
        <authorList>
            <person name="Mayer M."/>
            <person name="Doerries K."/>
        </authorList>
    </citation>
    <scope>NUCLEOTIDE SEQUENCE [GENOMIC DNA]</scope>
</reference>
<proteinExistence type="inferred from homology"/>
<name>ST_POVMK</name>
<evidence type="ECO:0000250" key="1">
    <source>
        <dbReference type="UniProtKB" id="P03081"/>
    </source>
</evidence>
<accession>P24598</accession>
<feature type="chain" id="PRO_0000115060" description="Small t antigen">
    <location>
        <begin position="1"/>
        <end position="158"/>
    </location>
</feature>
<feature type="domain" description="J">
    <location>
        <begin position="12"/>
        <end position="75"/>
    </location>
</feature>
<feature type="zinc finger region" description="C4-type; atypical">
    <location>
        <begin position="95"/>
        <end position="106"/>
    </location>
</feature>
<feature type="zinc finger region" description="H1C3-type; atypical">
    <location>
        <begin position="112"/>
        <end position="130"/>
    </location>
</feature>
<feature type="modified residue" description="N-acetylmethionine; by host" evidence="1">
    <location>
        <position position="1"/>
    </location>
</feature>
<organism>
    <name type="scientific">Murine polyomavirus (strain Kilham)</name>
    <name type="common">MPyV</name>
    <name type="synonym">Murine pneumotropic virus</name>
    <dbReference type="NCBI Taxonomy" id="10638"/>
    <lineage>
        <taxon>Viruses</taxon>
        <taxon>Monodnaviria</taxon>
        <taxon>Shotokuvirae</taxon>
        <taxon>Cossaviricota</taxon>
        <taxon>Papovaviricetes</taxon>
        <taxon>Sepolyvirales</taxon>
        <taxon>Polyomaviridae</taxon>
        <taxon>Betapolyomavirus</taxon>
        <taxon>Betapolyomavirus secumuris</taxon>
    </lineage>
</organism>
<keyword id="KW-0007">Acetylation</keyword>
<keyword id="KW-0010">Activator</keyword>
<keyword id="KW-0025">Alternative splicing</keyword>
<keyword id="KW-0244">Early protein</keyword>
<keyword id="KW-1035">Host cytoplasm</keyword>
<keyword id="KW-1048">Host nucleus</keyword>
<keyword id="KW-0945">Host-virus interaction</keyword>
<keyword id="KW-0479">Metal-binding</keyword>
<keyword id="KW-0553">Oncogene</keyword>
<keyword id="KW-0597">Phosphoprotein</keyword>
<keyword id="KW-0804">Transcription</keyword>
<keyword id="KW-0805">Transcription regulation</keyword>
<keyword id="KW-0862">Zinc</keyword>
<keyword id="KW-0863">Zinc-finger</keyword>
<comment type="function">
    <text evidence="1">Promotes efficient viral genome replication by accelerating both G1 and S phase progression of the cell cycle. Inhibits host PP2A by binding to the A subunit, thereby displacing lower affinity regulatory B subunit. Inactivation of PP2A in turn results in the transactivation of cyclin A and cyclin D1 promoters. Late during the infection cycle, ST may induce dephosphorylation of host MTOR, leading to the inhibition of cap-dependent translation. May establish and maintain high levels of viral genomes during persistent infection in cell culture.</text>
</comment>
<comment type="subunit">
    <text evidence="1">Interacts with host PPP2R1A; the interaction inhibits PP2A activity.</text>
</comment>
<comment type="subcellular location">
    <subcellularLocation>
        <location>Host cytoplasm</location>
    </subcellularLocation>
    <subcellularLocation>
        <location evidence="1">Host nucleus</location>
    </subcellularLocation>
</comment>
<comment type="alternative products">
    <event type="alternative splicing"/>
    <isoform>
        <id>P24598-1</id>
        <name>Small t antigen</name>
        <sequence type="displayed"/>
    </isoform>
    <isoform>
        <id>P24597-1</id>
        <name>Large T antigen</name>
        <sequence type="external"/>
    </isoform>
</comment>
<comment type="domain">
    <text evidence="1">The common region of ST and LT proteins comprises the J domain. This domain is essential for multiple viral activities, including virion assembly, viral DNA replication, transformation and transcriptional activation. This domain is also required for cyclin A-transactivating activity of ST.</text>
</comment>
<sequence length="158" mass="18816">MDHQLTREESQRLMHLLKLPMEQYGNFPLMRKAFLRACKIVHPDKGGSDELSQELISLYRRLEESLPCLSTQDFIETDKVCLIEKIDYLTDWINCNFENCNKCLYCRLWNNHKSDPPFPKVWGYCLCYKCYIIWFGLEPCHFAFQSWMQIIALTPFCA</sequence>
<dbReference type="EMBL" id="M55904">
    <property type="protein sequence ID" value="AAA46552.1"/>
    <property type="molecule type" value="Genomic_DNA"/>
</dbReference>
<dbReference type="PIR" id="B37945">
    <property type="entry name" value="TVVPMA"/>
</dbReference>
<dbReference type="RefSeq" id="NP_041233.1">
    <property type="nucleotide sequence ID" value="NC_001505.2"/>
</dbReference>
<dbReference type="SMR" id="P24598"/>
<dbReference type="GeneID" id="29031027"/>
<dbReference type="KEGG" id="vg:29031027"/>
<dbReference type="Proteomes" id="UP000106006">
    <property type="component" value="Segment"/>
</dbReference>
<dbReference type="GO" id="GO:0030430">
    <property type="term" value="C:host cell cytoplasm"/>
    <property type="evidence" value="ECO:0007669"/>
    <property type="project" value="UniProtKB-SubCell"/>
</dbReference>
<dbReference type="GO" id="GO:0042025">
    <property type="term" value="C:host cell nucleus"/>
    <property type="evidence" value="ECO:0007669"/>
    <property type="project" value="UniProtKB-SubCell"/>
</dbReference>
<dbReference type="GO" id="GO:0008270">
    <property type="term" value="F:zinc ion binding"/>
    <property type="evidence" value="ECO:0007669"/>
    <property type="project" value="UniProtKB-KW"/>
</dbReference>
<dbReference type="Gene3D" id="1.10.287.110">
    <property type="entry name" value="DnaJ domain"/>
    <property type="match status" value="1"/>
</dbReference>
<dbReference type="Gene3D" id="1.20.120.1860">
    <property type="entry name" value="Small t-antigen, unique domain"/>
    <property type="match status" value="1"/>
</dbReference>
<dbReference type="InterPro" id="IPR001623">
    <property type="entry name" value="DnaJ_domain"/>
</dbReference>
<dbReference type="InterPro" id="IPR036869">
    <property type="entry name" value="J_dom_sf"/>
</dbReference>
<dbReference type="InterPro" id="IPR003354">
    <property type="entry name" value="Papo_T_antigen"/>
</dbReference>
<dbReference type="InterPro" id="IPR036092">
    <property type="entry name" value="Papo_T_antigensf"/>
</dbReference>
<dbReference type="Pfam" id="PF02380">
    <property type="entry name" value="Papo_T_antigen"/>
    <property type="match status" value="1"/>
</dbReference>
<dbReference type="SMART" id="SM00271">
    <property type="entry name" value="DnaJ"/>
    <property type="match status" value="1"/>
</dbReference>
<dbReference type="SUPFAM" id="SSF46565">
    <property type="entry name" value="Chaperone J-domain"/>
    <property type="match status" value="1"/>
</dbReference>
<dbReference type="SUPFAM" id="SSF161240">
    <property type="entry name" value="T-antigen specific domain-like"/>
    <property type="match status" value="1"/>
</dbReference>
<protein>
    <recommendedName>
        <fullName>Small t antigen</fullName>
        <shortName>ST</shortName>
        <shortName>ST-AG</shortName>
    </recommendedName>
</protein>